<name>TAPFS_BPMU</name>
<protein>
    <recommendedName>
        <fullName>Probable tail assembly protein FS-gp41</fullName>
    </recommendedName>
</protein>
<dbReference type="EMBL" id="AB000833">
    <property type="status" value="NOT_ANNOTATED_CDS"/>
    <property type="molecule type" value="Genomic_DNA"/>
</dbReference>
<dbReference type="EMBL" id="AF083977">
    <property type="status" value="NOT_ANNOTATED_CDS"/>
    <property type="molecule type" value="Genomic_DNA"/>
</dbReference>
<dbReference type="SMR" id="P0DJY4"/>
<dbReference type="Proteomes" id="UP000002611">
    <property type="component" value="Genome"/>
</dbReference>
<dbReference type="GO" id="GO:0030430">
    <property type="term" value="C:host cell cytoplasm"/>
    <property type="evidence" value="ECO:0007669"/>
    <property type="project" value="UniProtKB-SubCell"/>
</dbReference>
<dbReference type="GO" id="GO:0098003">
    <property type="term" value="P:viral tail assembly"/>
    <property type="evidence" value="ECO:0007669"/>
    <property type="project" value="UniProtKB-KW"/>
</dbReference>
<dbReference type="GO" id="GO:0075523">
    <property type="term" value="P:viral translational frameshifting"/>
    <property type="evidence" value="ECO:0007669"/>
    <property type="project" value="UniProtKB-KW"/>
</dbReference>
<dbReference type="InterPro" id="IPR056974">
    <property type="entry name" value="Tail_Gp41-like"/>
</dbReference>
<dbReference type="Pfam" id="PF23746">
    <property type="entry name" value="Gp41_Mu"/>
    <property type="match status" value="1"/>
</dbReference>
<comment type="function">
    <text evidence="2">Required for tail assembly (Probable). Together with gp41, may act as a chaperone promoting the assembly of the tape measure protein (TMP) and the tail tube protein (TTP) into a functional tail shaft (Potential).</text>
</comment>
<comment type="subcellular location">
    <subcellularLocation>
        <location evidence="2">Host cytoplasm</location>
    </subcellularLocation>
</comment>
<comment type="alternative products">
    <event type="ribosomal frameshifting"/>
    <isoform>
        <id>P0DJY4-1</id>
        <name>Tail assembly chaperone FS-gp41</name>
        <sequence type="displayed"/>
    </isoform>
    <isoform>
        <id>P79680-1</id>
        <name>Tail assembly chaperone gp41</name>
        <sequence type="external"/>
    </isoform>
</comment>
<comment type="induction">
    <text evidence="1">Expressed in the late phase of the viral replicative cycle. Expression of late genes is activated by the viral late transcription activator C.</text>
</comment>
<comment type="miscellaneous">
    <molecule>Isoform Tail assembly chaperone FS-gp41</molecule>
    <text>Produced by -2 ribosomal frameshifting.</text>
</comment>
<comment type="similarity">
    <text evidence="2">Belongs to the mulikevirus tail assembly protein family.</text>
</comment>
<reference key="1">
    <citation type="journal article" date="1998" name="Biochim. Biophys. Acta">
        <title>Discovery of the tail tube gene of bacteriophage Mu and sequence analysis of the sheath and tube genes.</title>
        <authorList>
            <person name="Takeda S."/>
            <person name="Sasaki T."/>
            <person name="Ritani A."/>
            <person name="Howe M.M."/>
            <person name="Arisaka F."/>
        </authorList>
    </citation>
    <scope>NUCLEOTIDE SEQUENCE [GENOMIC DNA]</scope>
</reference>
<reference key="2">
    <citation type="journal article" date="2002" name="J. Mol. Biol.">
        <title>Bacteriophage Mu genome sequence: analysis and comparison with Mu-like prophages in Haemophilus, Neisseria and Deinococcus.</title>
        <authorList>
            <person name="Morgan G.J."/>
            <person name="Hatfull G.F."/>
            <person name="Casjens S."/>
            <person name="Hendrix R.W."/>
        </authorList>
    </citation>
    <scope>NUCLEOTIDE SEQUENCE [LARGE SCALE GENOMIC DNA]</scope>
</reference>
<reference key="3">
    <citation type="journal article" date="1993" name="Genetics">
        <title>Mutational analysis of a C-dependent late promoter of bacteriophage Mu.</title>
        <authorList>
            <person name="Chiang L.W."/>
            <person name="Howe M.M."/>
        </authorList>
    </citation>
    <scope>INDUCTION</scope>
</reference>
<reference key="4">
    <citation type="journal article" date="2004" name="Mol. Cell">
        <title>Conserved translational frameshift in dsDNA bacteriophage tail assembly genes.</title>
        <authorList>
            <person name="Xu J."/>
            <person name="Hendrix R.W."/>
            <person name="Duda R.L."/>
        </authorList>
    </citation>
    <scope>RIBOSOMAL FRAMESHIFT</scope>
</reference>
<accession>P0DJY4</accession>
<organismHost>
    <name type="scientific">Enterobacteriaceae</name>
    <dbReference type="NCBI Taxonomy" id="543"/>
</organismHost>
<evidence type="ECO:0000269" key="1">
    <source>
    </source>
</evidence>
<evidence type="ECO:0000305" key="2"/>
<organism>
    <name type="scientific">Escherichia phage Mu</name>
    <name type="common">Bacteriophage Mu</name>
    <dbReference type="NCBI Taxonomy" id="2681603"/>
    <lineage>
        <taxon>Viruses</taxon>
        <taxon>Duplodnaviria</taxon>
        <taxon>Heunggongvirae</taxon>
        <taxon>Uroviricota</taxon>
        <taxon>Caudoviricetes</taxon>
        <taxon>Muvirus</taxon>
        <taxon>Muvirus mu</taxon>
    </lineage>
</organism>
<gene>
    <name type="ordered locus">Mup41</name>
</gene>
<proteinExistence type="evidence at transcript level"/>
<feature type="chain" id="PRO_0000429063" description="Probable tail assembly protein FS-gp41">
    <location>
        <begin position="1"/>
        <end position="188"/>
    </location>
</feature>
<sequence>MDEMNLGPEAQELHDSIVAEIQSGVLKLKDGLPFGTGDETEMQYDVTLRELTAGDMIDAQAAAEKLVMSKEGPVLVSSPSRMGLEMLRRQIASVGCIKGPLSMALIRKLSVDDFQRLSLATEMYDMAVAASLTQERGGEWLRCRNDIEKAATAIGVILKSGPEWALSLPLSRFFRHCQQAKTLSQYHR</sequence>
<keyword id="KW-1035">Host cytoplasm</keyword>
<keyword id="KW-0426">Late protein</keyword>
<keyword id="KW-1185">Reference proteome</keyword>
<keyword id="KW-0688">Ribosomal frameshifting</keyword>
<keyword id="KW-1188">Viral release from host cell</keyword>
<keyword id="KW-1245">Viral tail assembly</keyword>